<dbReference type="EMBL" id="X59720">
    <property type="protein sequence ID" value="CAA42392.1"/>
    <property type="molecule type" value="Genomic_DNA"/>
</dbReference>
<dbReference type="EMBL" id="AY692756">
    <property type="protein sequence ID" value="AAT92775.1"/>
    <property type="molecule type" value="Genomic_DNA"/>
</dbReference>
<dbReference type="EMBL" id="BK006937">
    <property type="protein sequence ID" value="DAA07433.1"/>
    <property type="molecule type" value="Genomic_DNA"/>
</dbReference>
<dbReference type="PIR" id="S19382">
    <property type="entry name" value="S19382"/>
</dbReference>
<dbReference type="RefSeq" id="NP_009878.1">
    <property type="nucleotide sequence ID" value="NM_001178697.1"/>
</dbReference>
<dbReference type="BioGRID" id="30933">
    <property type="interactions" value="255"/>
</dbReference>
<dbReference type="ComplexPortal" id="CPX-1270">
    <property type="entry name" value="Glycosylphosphatidylinositol-mannosyltransferase I complex"/>
</dbReference>
<dbReference type="DIP" id="DIP-8257N"/>
<dbReference type="FunCoup" id="P25580">
    <property type="interactions" value="64"/>
</dbReference>
<dbReference type="IntAct" id="P25580">
    <property type="interactions" value="6"/>
</dbReference>
<dbReference type="MINT" id="P25580"/>
<dbReference type="STRING" id="4932.YCL052C"/>
<dbReference type="GlyCosmos" id="P25580">
    <property type="glycosylation" value="5 sites, No reported glycans"/>
</dbReference>
<dbReference type="GlyGen" id="P25580">
    <property type="glycosylation" value="5 sites"/>
</dbReference>
<dbReference type="PaxDb" id="4932-YCL052C"/>
<dbReference type="PeptideAtlas" id="P25580"/>
<dbReference type="EnsemblFungi" id="YCL052C_mRNA">
    <property type="protein sequence ID" value="YCL052C"/>
    <property type="gene ID" value="YCL052C"/>
</dbReference>
<dbReference type="GeneID" id="850305"/>
<dbReference type="KEGG" id="sce:YCL052C"/>
<dbReference type="AGR" id="SGD:S000000557"/>
<dbReference type="SGD" id="S000000557">
    <property type="gene designation" value="PBN1"/>
</dbReference>
<dbReference type="VEuPathDB" id="FungiDB:YCL052C"/>
<dbReference type="eggNOG" id="ENOG502QS8N">
    <property type="taxonomic scope" value="Eukaryota"/>
</dbReference>
<dbReference type="HOGENOM" id="CLU_055666_0_0_1"/>
<dbReference type="InParanoid" id="P25580"/>
<dbReference type="OMA" id="DKAWGSE"/>
<dbReference type="OrthoDB" id="5546453at2759"/>
<dbReference type="BioCyc" id="YEAST:G3O-29306-MONOMER"/>
<dbReference type="BRENDA" id="3.4.21.48">
    <property type="organism ID" value="984"/>
</dbReference>
<dbReference type="UniPathway" id="UPA00196"/>
<dbReference type="BioGRID-ORCS" id="850305">
    <property type="hits" value="5 hits in 10 CRISPR screens"/>
</dbReference>
<dbReference type="PRO" id="PR:P25580"/>
<dbReference type="Proteomes" id="UP000002311">
    <property type="component" value="Chromosome III"/>
</dbReference>
<dbReference type="RNAct" id="P25580">
    <property type="molecule type" value="protein"/>
</dbReference>
<dbReference type="GO" id="GO:0005783">
    <property type="term" value="C:endoplasmic reticulum"/>
    <property type="evidence" value="ECO:0000314"/>
    <property type="project" value="SGD"/>
</dbReference>
<dbReference type="GO" id="GO:0005789">
    <property type="term" value="C:endoplasmic reticulum membrane"/>
    <property type="evidence" value="ECO:0000303"/>
    <property type="project" value="ComplexPortal"/>
</dbReference>
<dbReference type="GO" id="GO:1990529">
    <property type="term" value="C:glycosylphosphatidylinositol-mannosyltransferase I complex"/>
    <property type="evidence" value="ECO:0000353"/>
    <property type="project" value="SGD"/>
</dbReference>
<dbReference type="GO" id="GO:0036503">
    <property type="term" value="P:ERAD pathway"/>
    <property type="evidence" value="ECO:0000315"/>
    <property type="project" value="SGD"/>
</dbReference>
<dbReference type="GO" id="GO:0031505">
    <property type="term" value="P:fungal-type cell wall organization"/>
    <property type="evidence" value="ECO:0000303"/>
    <property type="project" value="ComplexPortal"/>
</dbReference>
<dbReference type="GO" id="GO:0006506">
    <property type="term" value="P:GPI anchor biosynthetic process"/>
    <property type="evidence" value="ECO:0000315"/>
    <property type="project" value="SGD"/>
</dbReference>
<dbReference type="GO" id="GO:0035268">
    <property type="term" value="P:protein mannosylation"/>
    <property type="evidence" value="ECO:0000303"/>
    <property type="project" value="ComplexPortal"/>
</dbReference>
<dbReference type="GO" id="GO:0016485">
    <property type="term" value="P:protein processing"/>
    <property type="evidence" value="ECO:0000315"/>
    <property type="project" value="SGD"/>
</dbReference>
<dbReference type="InterPro" id="IPR042322">
    <property type="entry name" value="Pbn1"/>
</dbReference>
<dbReference type="InterPro" id="IPR013233">
    <property type="entry name" value="PIG-X/PBN1"/>
</dbReference>
<dbReference type="PANTHER" id="PTHR28533">
    <property type="entry name" value="PROTEIN PBN1"/>
    <property type="match status" value="1"/>
</dbReference>
<dbReference type="PANTHER" id="PTHR28533:SF1">
    <property type="entry name" value="PROTEIN PBN1"/>
    <property type="match status" value="1"/>
</dbReference>
<dbReference type="Pfam" id="PF08320">
    <property type="entry name" value="PIG-X"/>
    <property type="match status" value="1"/>
</dbReference>
<dbReference type="SMART" id="SM00780">
    <property type="entry name" value="PIG-X"/>
    <property type="match status" value="1"/>
</dbReference>
<comment type="function">
    <text evidence="3 4 5">Required for proper folding and/or the stability of a subset of proteins in the endoplasmic reticulum. Aids the autocatalytic processing of PRB1. Component of glycosylphosphatidylinositol-mannosyltransferase 1 which transfers the first of the 4 mannoses in the GPI-anchor precursors during GPI-anchor biosynthesis. Probably acts by stabilizing the mannosyltransferase GPI14.</text>
</comment>
<comment type="pathway">
    <text>Glycolipid biosynthesis; glycosylphosphatidylinositol-anchor biosynthesis.</text>
</comment>
<comment type="subcellular location">
    <subcellularLocation>
        <location evidence="5">Endoplasmic reticulum membrane</location>
        <topology evidence="5">Single-pass type III membrane protein</topology>
    </subcellularLocation>
</comment>
<comment type="PTM">
    <text evidence="5">N-glycosylated.</text>
</comment>
<comment type="miscellaneous">
    <text evidence="2">Present with 4930 molecules/cell in log phase SD medium.</text>
</comment>
<comment type="similarity">
    <text evidence="6">Belongs to the PIGX family.</text>
</comment>
<feature type="chain" id="PRO_0000058243" description="Protein PBN1">
    <location>
        <begin position="1"/>
        <end position="416"/>
    </location>
</feature>
<feature type="topological domain" description="Lumenal" evidence="1">
    <location>
        <begin position="1"/>
        <end position="385"/>
    </location>
</feature>
<feature type="transmembrane region" description="Helical; Signal-anchor for type III membrane protein" evidence="1">
    <location>
        <begin position="386"/>
        <end position="405"/>
    </location>
</feature>
<feature type="topological domain" description="Cytoplasmic" evidence="1">
    <location>
        <begin position="406"/>
        <end position="416"/>
    </location>
</feature>
<feature type="glycosylation site" description="N-linked (GlcNAc...) asparagine" evidence="1">
    <location>
        <position position="24"/>
    </location>
</feature>
<feature type="glycosylation site" description="N-linked (GlcNAc...) asparagine" evidence="1">
    <location>
        <position position="85"/>
    </location>
</feature>
<feature type="glycosylation site" description="N-linked (GlcNAc...) asparagine" evidence="1">
    <location>
        <position position="120"/>
    </location>
</feature>
<feature type="glycosylation site" description="N-linked (GlcNAc...) asparagine" evidence="1">
    <location>
        <position position="212"/>
    </location>
</feature>
<feature type="glycosylation site" description="N-linked (GlcNAc...) asparagine" evidence="1">
    <location>
        <position position="365"/>
    </location>
</feature>
<evidence type="ECO:0000255" key="1"/>
<evidence type="ECO:0000269" key="2">
    <source>
    </source>
</evidence>
<evidence type="ECO:0000269" key="3">
    <source>
    </source>
</evidence>
<evidence type="ECO:0000269" key="4">
    <source>
    </source>
</evidence>
<evidence type="ECO:0000269" key="5">
    <source>
    </source>
</evidence>
<evidence type="ECO:0000305" key="6"/>
<protein>
    <recommendedName>
        <fullName>Protein PBN1</fullName>
    </recommendedName>
    <alternativeName>
        <fullName>Protease B non-derepressible protein 1</fullName>
    </alternativeName>
</protein>
<keyword id="KW-0256">Endoplasmic reticulum</keyword>
<keyword id="KW-0325">Glycoprotein</keyword>
<keyword id="KW-0337">GPI-anchor biosynthesis</keyword>
<keyword id="KW-0472">Membrane</keyword>
<keyword id="KW-1185">Reference proteome</keyword>
<keyword id="KW-0812">Transmembrane</keyword>
<keyword id="KW-1133">Transmembrane helix</keyword>
<name>PBN1_YEAST</name>
<accession>P25580</accession>
<accession>D6VQW4</accession>
<reference key="1">
    <citation type="journal article" date="1992" name="Nature">
        <title>The complete DNA sequence of yeast chromosome III.</title>
        <authorList>
            <person name="Oliver S.G."/>
            <person name="van der Aart Q.J.M."/>
            <person name="Agostoni-Carbone M.L."/>
            <person name="Aigle M."/>
            <person name="Alberghina L."/>
            <person name="Alexandraki D."/>
            <person name="Antoine G."/>
            <person name="Anwar R."/>
            <person name="Ballesta J.P.G."/>
            <person name="Benit P."/>
            <person name="Berben G."/>
            <person name="Bergantino E."/>
            <person name="Biteau N."/>
            <person name="Bolle P.-A."/>
            <person name="Bolotin-Fukuhara M."/>
            <person name="Brown A."/>
            <person name="Brown A.J.P."/>
            <person name="Buhler J.-M."/>
            <person name="Carcano C."/>
            <person name="Carignani G."/>
            <person name="Cederberg H."/>
            <person name="Chanet R."/>
            <person name="Contreras R."/>
            <person name="Crouzet M."/>
            <person name="Daignan-Fornier B."/>
            <person name="Defoor E."/>
            <person name="Delgado M.D."/>
            <person name="Demolder J."/>
            <person name="Doira C."/>
            <person name="Dubois E."/>
            <person name="Dujon B."/>
            <person name="Duesterhoeft A."/>
            <person name="Erdmann D."/>
            <person name="Esteban M."/>
            <person name="Fabre F."/>
            <person name="Fairhead C."/>
            <person name="Faye G."/>
            <person name="Feldmann H."/>
            <person name="Fiers W."/>
            <person name="Francingues-Gaillard M.-C."/>
            <person name="Franco L."/>
            <person name="Frontali L."/>
            <person name="Fukuhara H."/>
            <person name="Fuller L.J."/>
            <person name="Galland P."/>
            <person name="Gent M.E."/>
            <person name="Gigot D."/>
            <person name="Gilliquet V."/>
            <person name="Glansdorff N."/>
            <person name="Goffeau A."/>
            <person name="Grenson M."/>
            <person name="Grisanti P."/>
            <person name="Grivell L.A."/>
            <person name="de Haan M."/>
            <person name="Haasemann M."/>
            <person name="Hatat D."/>
            <person name="Hoenicka J."/>
            <person name="Hegemann J.H."/>
            <person name="Herbert C.J."/>
            <person name="Hilger F."/>
            <person name="Hohmann S."/>
            <person name="Hollenberg C.P."/>
            <person name="Huse K."/>
            <person name="Iborra F."/>
            <person name="Indge K.J."/>
            <person name="Isono K."/>
            <person name="Jacq C."/>
            <person name="Jacquet M."/>
            <person name="James C.M."/>
            <person name="Jauniaux J.-C."/>
            <person name="Jia Y."/>
            <person name="Jimenez A."/>
            <person name="Kelly A."/>
            <person name="Kleinhans U."/>
            <person name="Kreisl P."/>
            <person name="Lanfranchi G."/>
            <person name="Lewis C."/>
            <person name="van der Linden C.G."/>
            <person name="Lucchini G."/>
            <person name="Lutzenkirchen K."/>
            <person name="Maat M.J."/>
            <person name="Mallet L."/>
            <person name="Mannhaupt G."/>
            <person name="Martegani E."/>
            <person name="Mathieu A."/>
            <person name="Maurer C.T.C."/>
            <person name="McConnell D."/>
            <person name="McKee R.A."/>
            <person name="Messenguy F."/>
            <person name="Mewes H.-W."/>
            <person name="Molemans F."/>
            <person name="Montague M.A."/>
            <person name="Muzi Falconi M."/>
            <person name="Navas L."/>
            <person name="Newlon C.S."/>
            <person name="Noone D."/>
            <person name="Pallier C."/>
            <person name="Panzeri L."/>
            <person name="Pearson B.M."/>
            <person name="Perea J."/>
            <person name="Philippsen P."/>
            <person name="Pierard A."/>
            <person name="Planta R.J."/>
            <person name="Plevani P."/>
            <person name="Poetsch B."/>
            <person name="Pohl F.M."/>
            <person name="Purnelle B."/>
            <person name="Ramezani Rad M."/>
            <person name="Rasmussen S.W."/>
            <person name="Raynal A."/>
            <person name="Remacha M.A."/>
            <person name="Richterich P."/>
            <person name="Roberts A.B."/>
            <person name="Rodriguez F."/>
            <person name="Sanz E."/>
            <person name="Schaaff-Gerstenschlaeger I."/>
            <person name="Scherens B."/>
            <person name="Schweitzer B."/>
            <person name="Shu Y."/>
            <person name="Skala J."/>
            <person name="Slonimski P.P."/>
            <person name="Sor F."/>
            <person name="Soustelle C."/>
            <person name="Spiegelberg R."/>
            <person name="Stateva L.I."/>
            <person name="Steensma H.Y."/>
            <person name="Steiner S."/>
            <person name="Thierry A."/>
            <person name="Thireos G."/>
            <person name="Tzermia M."/>
            <person name="Urrestarazu L.A."/>
            <person name="Valle G."/>
            <person name="Vetter I."/>
            <person name="van Vliet-Reedijk J.C."/>
            <person name="Voet M."/>
            <person name="Volckaert G."/>
            <person name="Vreken P."/>
            <person name="Wang H."/>
            <person name="Warmington J.R."/>
            <person name="von Wettstein D."/>
            <person name="Wicksteed B.L."/>
            <person name="Wilson C."/>
            <person name="Wurst H."/>
            <person name="Xu G."/>
            <person name="Yoshikawa A."/>
            <person name="Zimmermann F.K."/>
            <person name="Sgouros J.G."/>
        </authorList>
    </citation>
    <scope>NUCLEOTIDE SEQUENCE [LARGE SCALE GENOMIC DNA]</scope>
    <source>
        <strain>ATCC 204508 / S288c</strain>
    </source>
</reference>
<reference key="2">
    <citation type="journal article" date="2014" name="G3 (Bethesda)">
        <title>The reference genome sequence of Saccharomyces cerevisiae: Then and now.</title>
        <authorList>
            <person name="Engel S.R."/>
            <person name="Dietrich F.S."/>
            <person name="Fisk D.G."/>
            <person name="Binkley G."/>
            <person name="Balakrishnan R."/>
            <person name="Costanzo M.C."/>
            <person name="Dwight S.S."/>
            <person name="Hitz B.C."/>
            <person name="Karra K."/>
            <person name="Nash R.S."/>
            <person name="Weng S."/>
            <person name="Wong E.D."/>
            <person name="Lloyd P."/>
            <person name="Skrzypek M.S."/>
            <person name="Miyasato S.R."/>
            <person name="Simison M."/>
            <person name="Cherry J.M."/>
        </authorList>
    </citation>
    <scope>GENOME REANNOTATION</scope>
    <source>
        <strain>ATCC 204508 / S288c</strain>
    </source>
</reference>
<reference key="3">
    <citation type="journal article" date="2007" name="Genome Res.">
        <title>Approaching a complete repository of sequence-verified protein-encoding clones for Saccharomyces cerevisiae.</title>
        <authorList>
            <person name="Hu Y."/>
            <person name="Rolfs A."/>
            <person name="Bhullar B."/>
            <person name="Murthy T.V.S."/>
            <person name="Zhu C."/>
            <person name="Berger M.F."/>
            <person name="Camargo A.A."/>
            <person name="Kelley F."/>
            <person name="McCarron S."/>
            <person name="Jepson D."/>
            <person name="Richardson A."/>
            <person name="Raphael J."/>
            <person name="Moreira D."/>
            <person name="Taycher E."/>
            <person name="Zuo D."/>
            <person name="Mohr S."/>
            <person name="Kane M.F."/>
            <person name="Williamson J."/>
            <person name="Simpson A.J.G."/>
            <person name="Bulyk M.L."/>
            <person name="Harlow E."/>
            <person name="Marsischky G."/>
            <person name="Kolodner R.D."/>
            <person name="LaBaer J."/>
        </authorList>
    </citation>
    <scope>NUCLEOTIDE SEQUENCE [GENOMIC DNA]</scope>
    <source>
        <strain>ATCC 204508 / S288c</strain>
    </source>
</reference>
<reference key="4">
    <citation type="journal article" date="1997" name="Yeast">
        <title>Multiple copies of PBS2, MHP1 or LRE1 produce glucanase resistance and other cell wall effects in Saccharomyces cerevisiae.</title>
        <authorList>
            <person name="Lai M.H."/>
            <person name="Silverman S.J."/>
            <person name="Gaughran J.P."/>
            <person name="Kirsch D.R."/>
        </authorList>
    </citation>
    <scope>CHARACTERIZATION</scope>
</reference>
<reference key="5">
    <citation type="journal article" date="1998" name="Genetics">
        <title>The PBN1 gene of Saccharomyces cerevisiae: an essential gene that is required for the post-translational processing of the protease B precursor.</title>
        <authorList>
            <person name="Naik R.R."/>
            <person name="Jones E.W."/>
        </authorList>
    </citation>
    <scope>SUBCELLULAR LOCATION</scope>
    <scope>GLYCOSYLATION</scope>
    <scope>FUNCTION</scope>
</reference>
<reference key="6">
    <citation type="journal article" date="2003" name="Nature">
        <title>Global analysis of protein expression in yeast.</title>
        <authorList>
            <person name="Ghaemmaghami S."/>
            <person name="Huh W.-K."/>
            <person name="Bower K."/>
            <person name="Howson R.W."/>
            <person name="Belle A."/>
            <person name="Dephoure N."/>
            <person name="O'Shea E.K."/>
            <person name="Weissman J.S."/>
        </authorList>
    </citation>
    <scope>LEVEL OF PROTEIN EXPRESSION [LARGE SCALE ANALYSIS]</scope>
</reference>
<reference key="7">
    <citation type="journal article" date="2005" name="Mol. Biol. Cell">
        <title>Mammalian PIG-X and yeast Pbn1p are the essential components of glycosylphosphatidylinositol-mannosyltransferase I.</title>
        <authorList>
            <person name="Ashida H."/>
            <person name="Hong Y."/>
            <person name="Murakami Y."/>
            <person name="Shishioh N."/>
            <person name="Sugimoto N."/>
            <person name="Kim Y.U."/>
            <person name="Maeda Y."/>
            <person name="Kinoshita T."/>
        </authorList>
    </citation>
    <scope>FUNCTION</scope>
</reference>
<reference key="8">
    <citation type="journal article" date="2006" name="Proc. Natl. Acad. Sci. U.S.A.">
        <title>Pbn1p: an essential endoplasmic reticulum membrane protein required for protein processing in the endoplasmic reticulum of budding yeast.</title>
        <authorList>
            <person name="Subramanian S."/>
            <person name="Woolford C.A."/>
            <person name="Drill E."/>
            <person name="Lu M."/>
            <person name="Jones E.W."/>
        </authorList>
    </citation>
    <scope>FUNCTION</scope>
</reference>
<organism>
    <name type="scientific">Saccharomyces cerevisiae (strain ATCC 204508 / S288c)</name>
    <name type="common">Baker's yeast</name>
    <dbReference type="NCBI Taxonomy" id="559292"/>
    <lineage>
        <taxon>Eukaryota</taxon>
        <taxon>Fungi</taxon>
        <taxon>Dikarya</taxon>
        <taxon>Ascomycota</taxon>
        <taxon>Saccharomycotina</taxon>
        <taxon>Saccharomycetes</taxon>
        <taxon>Saccharomycetales</taxon>
        <taxon>Saccharomycetaceae</taxon>
        <taxon>Saccharomyces</taxon>
    </lineage>
</organism>
<sequence>MVTRHRVTVLYNAPEDIGNHMRQNDTHLTVRGGSGVVLQQRWLLERTGSLDKSFTRITWRPRADLARSLSVIENELSAGFSVYSNSSDVPERFITNPVYNSFHSEKFDIEQYLPPEVDLNLSWNPEDFTYDISVEPTQIQIVEYRLLKQGEEFTIARVKDEKLEVGVFFVDASDESDVDIGGIRCNWRMDDGKMERCQKTSLLYKQGHIAYNHSTTTTSLYLNEPIGLHPKIMIDLTDFEERPKCMYLMHLQLPLELFIDKFQSSPLLLFGEDDLELPEYSLRDKAWGSESIFELKAGTMNEVTLHTRYIEPSNNKGDKLEVSFDPEVILACDTGDNKVSRNPFYKKGLGYESLFTDDTTFRHLNSTTLLVPIPRPDTKDYSKIKNGTLLCLLISIIYIFSKVFGNNKKKRSVKRE</sequence>
<gene>
    <name type="primary">PBN1</name>
    <name type="ordered locus">YCL052C</name>
    <name type="ORF">YCL52C</name>
</gene>
<proteinExistence type="evidence at protein level"/>